<proteinExistence type="evidence at transcript level"/>
<reference key="1">
    <citation type="journal article" date="1993" name="Biochim. Biophys. Acta">
        <title>Cloning and sequencing of porcine moesin and radixin cDNA and identification of highly conserved domains.</title>
        <authorList>
            <person name="Lankes W.T."/>
            <person name="Schwartz-Albiez R."/>
            <person name="Furthmayr H."/>
        </authorList>
    </citation>
    <scope>NUCLEOTIDE SEQUENCE [MRNA]</scope>
</reference>
<accession>P26042</accession>
<keyword id="KW-0007">Acetylation</keyword>
<keyword id="KW-1003">Cell membrane</keyword>
<keyword id="KW-0966">Cell projection</keyword>
<keyword id="KW-0963">Cytoplasm</keyword>
<keyword id="KW-0206">Cytoskeleton</keyword>
<keyword id="KW-0472">Membrane</keyword>
<keyword id="KW-0597">Phosphoprotein</keyword>
<keyword id="KW-1185">Reference proteome</keyword>
<keyword id="KW-0702">S-nitrosylation</keyword>
<protein>
    <recommendedName>
        <fullName evidence="2">Moesin</fullName>
    </recommendedName>
    <alternativeName>
        <fullName>Membrane-organizing extension spike protein</fullName>
    </alternativeName>
</protein>
<name>MOES_PIG</name>
<organism>
    <name type="scientific">Sus scrofa</name>
    <name type="common">Pig</name>
    <dbReference type="NCBI Taxonomy" id="9823"/>
    <lineage>
        <taxon>Eukaryota</taxon>
        <taxon>Metazoa</taxon>
        <taxon>Chordata</taxon>
        <taxon>Craniata</taxon>
        <taxon>Vertebrata</taxon>
        <taxon>Euteleostomi</taxon>
        <taxon>Mammalia</taxon>
        <taxon>Eutheria</taxon>
        <taxon>Laurasiatheria</taxon>
        <taxon>Artiodactyla</taxon>
        <taxon>Suina</taxon>
        <taxon>Suidae</taxon>
        <taxon>Sus</taxon>
    </lineage>
</organism>
<feature type="chain" id="PRO_0000219418" description="Moesin">
    <location>
        <begin position="1"/>
        <end position="577"/>
    </location>
</feature>
<feature type="domain" description="FERM" evidence="5">
    <location>
        <begin position="2"/>
        <end position="295"/>
    </location>
</feature>
<feature type="region of interest" description="Disordered" evidence="6">
    <location>
        <begin position="376"/>
        <end position="415"/>
    </location>
</feature>
<feature type="region of interest" description="Disordered" evidence="6">
    <location>
        <begin position="434"/>
        <end position="518"/>
    </location>
</feature>
<feature type="short sequence motif" description="[IL]-x-C-x-x-[DE] motif" evidence="2">
    <location>
        <begin position="115"/>
        <end position="120"/>
    </location>
</feature>
<feature type="compositionally biased region" description="Basic and acidic residues" evidence="6">
    <location>
        <begin position="376"/>
        <end position="414"/>
    </location>
</feature>
<feature type="compositionally biased region" description="Acidic residues" evidence="6">
    <location>
        <begin position="476"/>
        <end position="487"/>
    </location>
</feature>
<feature type="compositionally biased region" description="Basic and acidic residues" evidence="6">
    <location>
        <begin position="492"/>
        <end position="518"/>
    </location>
</feature>
<feature type="modified residue" description="Phosphoserine" evidence="2">
    <location>
        <position position="74"/>
    </location>
</feature>
<feature type="modified residue" description="N6-acetyllysine" evidence="2">
    <location>
        <position position="79"/>
    </location>
</feature>
<feature type="modified residue" description="N6-succinyllysine" evidence="4">
    <location>
        <position position="83"/>
    </location>
</feature>
<feature type="modified residue" description="Phosphotyrosine" evidence="2">
    <location>
        <position position="116"/>
    </location>
</feature>
<feature type="modified residue" description="S-nitrosocysteine" evidence="2">
    <location>
        <position position="117"/>
    </location>
</feature>
<feature type="modified residue" description="N6-acetyllysine" evidence="2">
    <location>
        <position position="139"/>
    </location>
</feature>
<feature type="modified residue" description="N6-acetyllysine" evidence="3">
    <location>
        <position position="165"/>
    </location>
</feature>
<feature type="modified residue" description="Phosphoserine" evidence="2">
    <location>
        <position position="407"/>
    </location>
</feature>
<feature type="modified residue" description="Phosphoserine" evidence="2">
    <location>
        <position position="527"/>
    </location>
</feature>
<feature type="modified residue" description="Phosphothreonine; by ROCK2 and STK10" evidence="2">
    <location>
        <position position="558"/>
    </location>
</feature>
<gene>
    <name evidence="2" type="primary">MSN</name>
</gene>
<comment type="function">
    <text evidence="2">Probably involved in connections of major cytoskeletal structures to the plasma membrane. Plays a role in regulating the proliferation, migration, and adhesion of human lymphoid cells and participates in immunologic synapse formation.</text>
</comment>
<comment type="activity regulation">
    <text evidence="1">A head-to-tail association, of the N-terminal and C-terminal halves results in a closed conformation (inactive form) which is incapable of actin or membrane-binding.</text>
</comment>
<comment type="subunit">
    <text evidence="2 3">Binds NHERF1. In resting T-cells, part of a PAG1-NHERF1-MSN complex which is disrupted upon TCR activation. Interacts with PPP1R16B. Interacts with PDZD8. Interacts with SELPLG and SYK; mediates the activation of SYK by SELPLG. Interacts with PDPN (via cytoplasmic domain); activates RHOA and promotes epithelial-mesenchymal transition. Interacts with SPN/CD43 cytoplasmic tail, CD44 and ICAM2 (By similarity).</text>
</comment>
<comment type="subcellular location">
    <subcellularLocation>
        <location evidence="3">Cell membrane</location>
        <topology evidence="3">Peripheral membrane protein</topology>
        <orientation evidence="3">Cytoplasmic side</orientation>
    </subcellularLocation>
    <subcellularLocation>
        <location evidence="3">Cytoplasm</location>
        <location evidence="3">Cytoskeleton</location>
    </subcellularLocation>
    <subcellularLocation>
        <location evidence="3">Apical cell membrane</location>
        <topology evidence="3">Peripheral membrane protein</topology>
        <orientation evidence="3">Cytoplasmic side</orientation>
    </subcellularLocation>
    <subcellularLocation>
        <location evidence="3">Cell projection</location>
        <location evidence="3">Microvillus membrane</location>
        <topology evidence="3">Peripheral membrane protein</topology>
        <orientation evidence="3">Cytoplasmic side</orientation>
    </subcellularLocation>
    <subcellularLocation>
        <location evidence="3">Cell projection</location>
        <location evidence="3">Microvillus</location>
    </subcellularLocation>
    <text evidence="2 3">Phosphorylated form is enriched in microvilli-like structures at apical membrane. Increased cell membrane localization of both phosphorylated and non-phosphorylated forms seen after thrombin treatment (By similarity).</text>
</comment>
<comment type="domain">
    <text evidence="2">The [IL]-x-C-x-x-[DE] motif is a proposed target motif for cysteine S-nitrosylation mediated by the iNOS-S100A8/A9 transnitrosylase complex.</text>
</comment>
<comment type="PTM">
    <text evidence="1">Phosphorylation on Thr-558 is crucial for the formation of microvilli-like structures. Phosphorylation by ROCK2 suppresses the head-to-tail association of the N-terminal and C-terminal halves resulting in an opened conformation which is capable of actin and membrane-binding. Phosphorylation on Thr-558 by STK10 negatively regulates lymphocyte migration and polarization (By similarity).</text>
</comment>
<comment type="PTM">
    <text evidence="2">S-nitrosylation of Cys-117 is induced by interferon-gamma and oxidatively-modified low-densitity lipoprotein (LDL(ox)) implicating the iNOS-S100A8/9 transnitrosylase complex.</text>
</comment>
<dbReference type="EMBL" id="M86450">
    <property type="protein sequence ID" value="AAB02864.1"/>
    <property type="molecule type" value="mRNA"/>
</dbReference>
<dbReference type="PIR" id="S39804">
    <property type="entry name" value="S39804"/>
</dbReference>
<dbReference type="RefSeq" id="NP_001009578.1">
    <property type="nucleotide sequence ID" value="NM_001009578.1"/>
</dbReference>
<dbReference type="SMR" id="P26042"/>
<dbReference type="FunCoup" id="P26042">
    <property type="interactions" value="1130"/>
</dbReference>
<dbReference type="STRING" id="9823.ENSSSCP00000044358"/>
<dbReference type="PaxDb" id="9823-ENSSSCP00000013160"/>
<dbReference type="PeptideAtlas" id="P26042"/>
<dbReference type="GeneID" id="494458"/>
<dbReference type="KEGG" id="ssc:494458"/>
<dbReference type="CTD" id="4478"/>
<dbReference type="eggNOG" id="KOG3529">
    <property type="taxonomic scope" value="Eukaryota"/>
</dbReference>
<dbReference type="InParanoid" id="P26042"/>
<dbReference type="OrthoDB" id="6018897at2759"/>
<dbReference type="Proteomes" id="UP000008227">
    <property type="component" value="Unplaced"/>
</dbReference>
<dbReference type="Proteomes" id="UP000314985">
    <property type="component" value="Unplaced"/>
</dbReference>
<dbReference type="Proteomes" id="UP000694570">
    <property type="component" value="Unplaced"/>
</dbReference>
<dbReference type="Proteomes" id="UP000694571">
    <property type="component" value="Unplaced"/>
</dbReference>
<dbReference type="Proteomes" id="UP000694720">
    <property type="component" value="Unplaced"/>
</dbReference>
<dbReference type="Proteomes" id="UP000694722">
    <property type="component" value="Unplaced"/>
</dbReference>
<dbReference type="Proteomes" id="UP000694723">
    <property type="component" value="Unplaced"/>
</dbReference>
<dbReference type="Proteomes" id="UP000694724">
    <property type="component" value="Unplaced"/>
</dbReference>
<dbReference type="Proteomes" id="UP000694725">
    <property type="component" value="Unplaced"/>
</dbReference>
<dbReference type="Proteomes" id="UP000694726">
    <property type="component" value="Unplaced"/>
</dbReference>
<dbReference type="Proteomes" id="UP000694727">
    <property type="component" value="Unplaced"/>
</dbReference>
<dbReference type="Proteomes" id="UP000694728">
    <property type="component" value="Unplaced"/>
</dbReference>
<dbReference type="GO" id="GO:0005912">
    <property type="term" value="C:adherens junction"/>
    <property type="evidence" value="ECO:0000318"/>
    <property type="project" value="GO_Central"/>
</dbReference>
<dbReference type="GO" id="GO:0045177">
    <property type="term" value="C:apical part of cell"/>
    <property type="evidence" value="ECO:0000318"/>
    <property type="project" value="GO_Central"/>
</dbReference>
<dbReference type="GO" id="GO:0016324">
    <property type="term" value="C:apical plasma membrane"/>
    <property type="evidence" value="ECO:0007669"/>
    <property type="project" value="UniProtKB-SubCell"/>
</dbReference>
<dbReference type="GO" id="GO:0005737">
    <property type="term" value="C:cytoplasm"/>
    <property type="evidence" value="ECO:0007669"/>
    <property type="project" value="UniProtKB-KW"/>
</dbReference>
<dbReference type="GO" id="GO:0005856">
    <property type="term" value="C:cytoskeleton"/>
    <property type="evidence" value="ECO:0007669"/>
    <property type="project" value="UniProtKB-SubCell"/>
</dbReference>
<dbReference type="GO" id="GO:0030175">
    <property type="term" value="C:filopodium"/>
    <property type="evidence" value="ECO:0000318"/>
    <property type="project" value="GO_Central"/>
</dbReference>
<dbReference type="GO" id="GO:0005902">
    <property type="term" value="C:microvillus"/>
    <property type="evidence" value="ECO:0000250"/>
    <property type="project" value="UniProtKB"/>
</dbReference>
<dbReference type="GO" id="GO:0031528">
    <property type="term" value="C:microvillus membrane"/>
    <property type="evidence" value="ECO:0007669"/>
    <property type="project" value="UniProtKB-SubCell"/>
</dbReference>
<dbReference type="GO" id="GO:0005886">
    <property type="term" value="C:plasma membrane"/>
    <property type="evidence" value="ECO:0000318"/>
    <property type="project" value="GO_Central"/>
</dbReference>
<dbReference type="GO" id="GO:0003779">
    <property type="term" value="F:actin binding"/>
    <property type="evidence" value="ECO:0000318"/>
    <property type="project" value="GO_Central"/>
</dbReference>
<dbReference type="GO" id="GO:0050839">
    <property type="term" value="F:cell adhesion molecule binding"/>
    <property type="evidence" value="ECO:0000318"/>
    <property type="project" value="GO_Central"/>
</dbReference>
<dbReference type="GO" id="GO:0001771">
    <property type="term" value="P:immunological synapse formation"/>
    <property type="evidence" value="ECO:0000250"/>
    <property type="project" value="UniProtKB"/>
</dbReference>
<dbReference type="GO" id="GO:2000643">
    <property type="term" value="P:positive regulation of early endosome to late endosome transport"/>
    <property type="evidence" value="ECO:0000318"/>
    <property type="project" value="GO_Central"/>
</dbReference>
<dbReference type="GO" id="GO:1902966">
    <property type="term" value="P:positive regulation of protein localization to early endosome"/>
    <property type="evidence" value="ECO:0000318"/>
    <property type="project" value="GO_Central"/>
</dbReference>
<dbReference type="GO" id="GO:0008360">
    <property type="term" value="P:regulation of cell shape"/>
    <property type="evidence" value="ECO:0000318"/>
    <property type="project" value="GO_Central"/>
</dbReference>
<dbReference type="GO" id="GO:1902115">
    <property type="term" value="P:regulation of organelle assembly"/>
    <property type="evidence" value="ECO:0000318"/>
    <property type="project" value="GO_Central"/>
</dbReference>
<dbReference type="GO" id="GO:0070489">
    <property type="term" value="P:T cell aggregation"/>
    <property type="evidence" value="ECO:0000250"/>
    <property type="project" value="UniProtKB"/>
</dbReference>
<dbReference type="GO" id="GO:0072678">
    <property type="term" value="P:T cell migration"/>
    <property type="evidence" value="ECO:0000250"/>
    <property type="project" value="UniProtKB"/>
</dbReference>
<dbReference type="GO" id="GO:0042098">
    <property type="term" value="P:T cell proliferation"/>
    <property type="evidence" value="ECO:0000250"/>
    <property type="project" value="UniProtKB"/>
</dbReference>
<dbReference type="CDD" id="cd14473">
    <property type="entry name" value="FERM_B-lobe"/>
    <property type="match status" value="1"/>
</dbReference>
<dbReference type="CDD" id="cd13194">
    <property type="entry name" value="FERM_C_ERM"/>
    <property type="match status" value="1"/>
</dbReference>
<dbReference type="CDD" id="cd17187">
    <property type="entry name" value="FERM_F1_ERM"/>
    <property type="match status" value="1"/>
</dbReference>
<dbReference type="FunFam" id="2.30.29.30:FF:000003">
    <property type="entry name" value="Radixin isoform 1"/>
    <property type="match status" value="1"/>
</dbReference>
<dbReference type="FunFam" id="1.20.80.10:FF:000002">
    <property type="entry name" value="radixin isoform X1"/>
    <property type="match status" value="1"/>
</dbReference>
<dbReference type="FunFam" id="3.10.20.90:FF:000013">
    <property type="entry name" value="radixin isoform X1"/>
    <property type="match status" value="1"/>
</dbReference>
<dbReference type="FunFam" id="1.20.5.450:FF:000001">
    <property type="entry name" value="radixin isoform X2"/>
    <property type="match status" value="1"/>
</dbReference>
<dbReference type="Gene3D" id="1.20.5.450">
    <property type="match status" value="1"/>
</dbReference>
<dbReference type="Gene3D" id="1.20.80.10">
    <property type="match status" value="1"/>
</dbReference>
<dbReference type="Gene3D" id="6.10.360.10">
    <property type="match status" value="1"/>
</dbReference>
<dbReference type="Gene3D" id="3.10.20.90">
    <property type="entry name" value="Phosphatidylinositol 3-kinase Catalytic Subunit, Chain A, domain 1"/>
    <property type="match status" value="1"/>
</dbReference>
<dbReference type="Gene3D" id="2.30.29.30">
    <property type="entry name" value="Pleckstrin-homology domain (PH domain)/Phosphotyrosine-binding domain (PTB)"/>
    <property type="match status" value="1"/>
</dbReference>
<dbReference type="InterPro" id="IPR019749">
    <property type="entry name" value="Band_41_domain"/>
</dbReference>
<dbReference type="InterPro" id="IPR011174">
    <property type="entry name" value="ERM"/>
</dbReference>
<dbReference type="InterPro" id="IPR011259">
    <property type="entry name" value="ERM_C_dom"/>
</dbReference>
<dbReference type="InterPro" id="IPR041789">
    <property type="entry name" value="ERM_FERM_C"/>
</dbReference>
<dbReference type="InterPro" id="IPR046810">
    <property type="entry name" value="ERM_helical"/>
</dbReference>
<dbReference type="InterPro" id="IPR000798">
    <property type="entry name" value="Ez/rad/moesin-like"/>
</dbReference>
<dbReference type="InterPro" id="IPR014352">
    <property type="entry name" value="FERM/acyl-CoA-bd_prot_sf"/>
</dbReference>
<dbReference type="InterPro" id="IPR035963">
    <property type="entry name" value="FERM_2"/>
</dbReference>
<dbReference type="InterPro" id="IPR019748">
    <property type="entry name" value="FERM_central"/>
</dbReference>
<dbReference type="InterPro" id="IPR019747">
    <property type="entry name" value="FERM_CS"/>
</dbReference>
<dbReference type="InterPro" id="IPR000299">
    <property type="entry name" value="FERM_domain"/>
</dbReference>
<dbReference type="InterPro" id="IPR018979">
    <property type="entry name" value="FERM_N"/>
</dbReference>
<dbReference type="InterPro" id="IPR018980">
    <property type="entry name" value="FERM_PH-like_C"/>
</dbReference>
<dbReference type="InterPro" id="IPR008954">
    <property type="entry name" value="Moesin_tail_sf"/>
</dbReference>
<dbReference type="InterPro" id="IPR011993">
    <property type="entry name" value="PH-like_dom_sf"/>
</dbReference>
<dbReference type="InterPro" id="IPR029071">
    <property type="entry name" value="Ubiquitin-like_domsf"/>
</dbReference>
<dbReference type="PANTHER" id="PTHR23281">
    <property type="entry name" value="MERLIN/MOESIN/EZRIN/RADIXIN"/>
    <property type="match status" value="1"/>
</dbReference>
<dbReference type="Pfam" id="PF00769">
    <property type="entry name" value="ERM_C"/>
    <property type="match status" value="1"/>
</dbReference>
<dbReference type="Pfam" id="PF20492">
    <property type="entry name" value="ERM_helical"/>
    <property type="match status" value="1"/>
</dbReference>
<dbReference type="Pfam" id="PF09380">
    <property type="entry name" value="FERM_C"/>
    <property type="match status" value="1"/>
</dbReference>
<dbReference type="Pfam" id="PF00373">
    <property type="entry name" value="FERM_M"/>
    <property type="match status" value="1"/>
</dbReference>
<dbReference type="Pfam" id="PF09379">
    <property type="entry name" value="FERM_N"/>
    <property type="match status" value="1"/>
</dbReference>
<dbReference type="PIRSF" id="PIRSF002305">
    <property type="entry name" value="ERM"/>
    <property type="match status" value="1"/>
</dbReference>
<dbReference type="PRINTS" id="PR00935">
    <property type="entry name" value="BAND41"/>
</dbReference>
<dbReference type="PRINTS" id="PR00661">
    <property type="entry name" value="ERMFAMILY"/>
</dbReference>
<dbReference type="SMART" id="SM00295">
    <property type="entry name" value="B41"/>
    <property type="match status" value="1"/>
</dbReference>
<dbReference type="SMART" id="SM01196">
    <property type="entry name" value="FERM_C"/>
    <property type="match status" value="1"/>
</dbReference>
<dbReference type="SUPFAM" id="SSF48678">
    <property type="entry name" value="Moesin tail domain"/>
    <property type="match status" value="1"/>
</dbReference>
<dbReference type="SUPFAM" id="SSF50729">
    <property type="entry name" value="PH domain-like"/>
    <property type="match status" value="1"/>
</dbReference>
<dbReference type="SUPFAM" id="SSF47031">
    <property type="entry name" value="Second domain of FERM"/>
    <property type="match status" value="1"/>
</dbReference>
<dbReference type="SUPFAM" id="SSF54236">
    <property type="entry name" value="Ubiquitin-like"/>
    <property type="match status" value="1"/>
</dbReference>
<dbReference type="PROSITE" id="PS00660">
    <property type="entry name" value="FERM_1"/>
    <property type="match status" value="1"/>
</dbReference>
<dbReference type="PROSITE" id="PS00661">
    <property type="entry name" value="FERM_2"/>
    <property type="match status" value="1"/>
</dbReference>
<dbReference type="PROSITE" id="PS50057">
    <property type="entry name" value="FERM_3"/>
    <property type="match status" value="1"/>
</dbReference>
<sequence>MPKTINVRVTTMDAELEFAIQPNTTGKQLFDQVVKTIGLREVWFFGLQYQDTKGFSTWLKLNKKVTAQDVRKESPLLFKFRAKFYPEDVSEELIQDITQRLFFLQVKEGILNDDIYCPPETAVLLASYAVQSKYGDFNKEVHKSGYLAGDKLLPQRVLEQHKLNKDQWEERIQVWHEEHRGMLREDAVLEYLKIAQDLEMYGVNYFSSKNKKGSELWLGVDALGLNIYEQNDRLTPKIGFPWSEIRNISFNDKKFVIKPIDKKAPDFVFYAPRLRINKRILALCMGNHELYMRRRKPDTIEVQQMKAQAREEKHQKQMERALLENEKKKREMAEKEKEKIEREKEELMERLKQIEEQTKKAQQELEEQTRRALALEQERKRAQSEAEKLAKERQEAEEAKEALLKASRDQKKTQEQLALEMAELTARISQLEMARQKKESEAAEWQQKAQMVQEDLEKTRAELKTAMSTPHGAEPAENDQDEQDENGAEASADLRADAMAKDRSEEERTTEAEKNERVQKHLKALTSELANARDESKKTANDMIHAENMRLGRDKYKTLRQIRQGNTKQRIDEFESM</sequence>
<evidence type="ECO:0000250" key="1"/>
<evidence type="ECO:0000250" key="2">
    <source>
        <dbReference type="UniProtKB" id="P26038"/>
    </source>
</evidence>
<evidence type="ECO:0000250" key="3">
    <source>
        <dbReference type="UniProtKB" id="P26041"/>
    </source>
</evidence>
<evidence type="ECO:0000250" key="4">
    <source>
        <dbReference type="UniProtKB" id="P26043"/>
    </source>
</evidence>
<evidence type="ECO:0000255" key="5">
    <source>
        <dbReference type="PROSITE-ProRule" id="PRU00084"/>
    </source>
</evidence>
<evidence type="ECO:0000256" key="6">
    <source>
        <dbReference type="SAM" id="MobiDB-lite"/>
    </source>
</evidence>